<protein>
    <recommendedName>
        <fullName evidence="1">UDP-N-acetylmuramate--L-alanine ligase</fullName>
        <ecNumber evidence="1">6.3.2.8</ecNumber>
    </recommendedName>
    <alternativeName>
        <fullName evidence="1">UDP-N-acetylmuramoyl-L-alanine synthetase</fullName>
    </alternativeName>
</protein>
<gene>
    <name evidence="1" type="primary">murC</name>
    <name type="ordered locus">RC0331</name>
</gene>
<name>MURC_RICCN</name>
<keyword id="KW-0067">ATP-binding</keyword>
<keyword id="KW-0131">Cell cycle</keyword>
<keyword id="KW-0132">Cell division</keyword>
<keyword id="KW-0133">Cell shape</keyword>
<keyword id="KW-0961">Cell wall biogenesis/degradation</keyword>
<keyword id="KW-0963">Cytoplasm</keyword>
<keyword id="KW-0436">Ligase</keyword>
<keyword id="KW-0547">Nucleotide-binding</keyword>
<keyword id="KW-0573">Peptidoglycan synthesis</keyword>
<dbReference type="EC" id="6.3.2.8" evidence="1"/>
<dbReference type="EMBL" id="AE006914">
    <property type="protein sequence ID" value="AAL02869.1"/>
    <property type="molecule type" value="Genomic_DNA"/>
</dbReference>
<dbReference type="PIR" id="C97741">
    <property type="entry name" value="C97741"/>
</dbReference>
<dbReference type="RefSeq" id="WP_010976986.1">
    <property type="nucleotide sequence ID" value="NC_003103.1"/>
</dbReference>
<dbReference type="SMR" id="Q92IT9"/>
<dbReference type="GeneID" id="928688"/>
<dbReference type="KEGG" id="rco:RC0331"/>
<dbReference type="PATRIC" id="fig|272944.4.peg.380"/>
<dbReference type="HOGENOM" id="CLU_028104_2_2_5"/>
<dbReference type="UniPathway" id="UPA00219"/>
<dbReference type="Proteomes" id="UP000000816">
    <property type="component" value="Chromosome"/>
</dbReference>
<dbReference type="GO" id="GO:0005737">
    <property type="term" value="C:cytoplasm"/>
    <property type="evidence" value="ECO:0007669"/>
    <property type="project" value="UniProtKB-SubCell"/>
</dbReference>
<dbReference type="GO" id="GO:0005524">
    <property type="term" value="F:ATP binding"/>
    <property type="evidence" value="ECO:0007669"/>
    <property type="project" value="UniProtKB-UniRule"/>
</dbReference>
<dbReference type="GO" id="GO:0008763">
    <property type="term" value="F:UDP-N-acetylmuramate-L-alanine ligase activity"/>
    <property type="evidence" value="ECO:0007669"/>
    <property type="project" value="UniProtKB-UniRule"/>
</dbReference>
<dbReference type="GO" id="GO:0051301">
    <property type="term" value="P:cell division"/>
    <property type="evidence" value="ECO:0007669"/>
    <property type="project" value="UniProtKB-KW"/>
</dbReference>
<dbReference type="GO" id="GO:0071555">
    <property type="term" value="P:cell wall organization"/>
    <property type="evidence" value="ECO:0007669"/>
    <property type="project" value="UniProtKB-KW"/>
</dbReference>
<dbReference type="GO" id="GO:0009252">
    <property type="term" value="P:peptidoglycan biosynthetic process"/>
    <property type="evidence" value="ECO:0007669"/>
    <property type="project" value="UniProtKB-UniRule"/>
</dbReference>
<dbReference type="GO" id="GO:0008360">
    <property type="term" value="P:regulation of cell shape"/>
    <property type="evidence" value="ECO:0007669"/>
    <property type="project" value="UniProtKB-KW"/>
</dbReference>
<dbReference type="Gene3D" id="3.90.190.20">
    <property type="entry name" value="Mur ligase, C-terminal domain"/>
    <property type="match status" value="1"/>
</dbReference>
<dbReference type="Gene3D" id="3.40.1190.10">
    <property type="entry name" value="Mur-like, catalytic domain"/>
    <property type="match status" value="1"/>
</dbReference>
<dbReference type="Gene3D" id="3.40.50.720">
    <property type="entry name" value="NAD(P)-binding Rossmann-like Domain"/>
    <property type="match status" value="1"/>
</dbReference>
<dbReference type="HAMAP" id="MF_00046">
    <property type="entry name" value="MurC"/>
    <property type="match status" value="1"/>
</dbReference>
<dbReference type="InterPro" id="IPR036565">
    <property type="entry name" value="Mur-like_cat_sf"/>
</dbReference>
<dbReference type="InterPro" id="IPR004101">
    <property type="entry name" value="Mur_ligase_C"/>
</dbReference>
<dbReference type="InterPro" id="IPR036615">
    <property type="entry name" value="Mur_ligase_C_dom_sf"/>
</dbReference>
<dbReference type="InterPro" id="IPR013221">
    <property type="entry name" value="Mur_ligase_cen"/>
</dbReference>
<dbReference type="InterPro" id="IPR000713">
    <property type="entry name" value="Mur_ligase_N"/>
</dbReference>
<dbReference type="InterPro" id="IPR050061">
    <property type="entry name" value="MurCDEF_pg_biosynth"/>
</dbReference>
<dbReference type="InterPro" id="IPR005758">
    <property type="entry name" value="UDP-N-AcMur_Ala_ligase_MurC"/>
</dbReference>
<dbReference type="NCBIfam" id="TIGR01082">
    <property type="entry name" value="murC"/>
    <property type="match status" value="1"/>
</dbReference>
<dbReference type="PANTHER" id="PTHR43445:SF3">
    <property type="entry name" value="UDP-N-ACETYLMURAMATE--L-ALANINE LIGASE"/>
    <property type="match status" value="1"/>
</dbReference>
<dbReference type="PANTHER" id="PTHR43445">
    <property type="entry name" value="UDP-N-ACETYLMURAMATE--L-ALANINE LIGASE-RELATED"/>
    <property type="match status" value="1"/>
</dbReference>
<dbReference type="Pfam" id="PF01225">
    <property type="entry name" value="Mur_ligase"/>
    <property type="match status" value="1"/>
</dbReference>
<dbReference type="Pfam" id="PF02875">
    <property type="entry name" value="Mur_ligase_C"/>
    <property type="match status" value="1"/>
</dbReference>
<dbReference type="Pfam" id="PF08245">
    <property type="entry name" value="Mur_ligase_M"/>
    <property type="match status" value="1"/>
</dbReference>
<dbReference type="SUPFAM" id="SSF51984">
    <property type="entry name" value="MurCD N-terminal domain"/>
    <property type="match status" value="1"/>
</dbReference>
<dbReference type="SUPFAM" id="SSF53623">
    <property type="entry name" value="MurD-like peptide ligases, catalytic domain"/>
    <property type="match status" value="1"/>
</dbReference>
<dbReference type="SUPFAM" id="SSF53244">
    <property type="entry name" value="MurD-like peptide ligases, peptide-binding domain"/>
    <property type="match status" value="1"/>
</dbReference>
<evidence type="ECO:0000255" key="1">
    <source>
        <dbReference type="HAMAP-Rule" id="MF_00046"/>
    </source>
</evidence>
<accession>Q92IT9</accession>
<reference key="1">
    <citation type="journal article" date="2001" name="Science">
        <title>Mechanisms of evolution in Rickettsia conorii and R. prowazekii.</title>
        <authorList>
            <person name="Ogata H."/>
            <person name="Audic S."/>
            <person name="Renesto-Audiffren P."/>
            <person name="Fournier P.-E."/>
            <person name="Barbe V."/>
            <person name="Samson D."/>
            <person name="Roux V."/>
            <person name="Cossart P."/>
            <person name="Weissenbach J."/>
            <person name="Claverie J.-M."/>
            <person name="Raoult D."/>
        </authorList>
    </citation>
    <scope>NUCLEOTIDE SEQUENCE [LARGE SCALE GENOMIC DNA]</scope>
    <source>
        <strain>ATCC VR-613 / Malish 7</strain>
    </source>
</reference>
<organism>
    <name type="scientific">Rickettsia conorii (strain ATCC VR-613 / Malish 7)</name>
    <dbReference type="NCBI Taxonomy" id="272944"/>
    <lineage>
        <taxon>Bacteria</taxon>
        <taxon>Pseudomonadati</taxon>
        <taxon>Pseudomonadota</taxon>
        <taxon>Alphaproteobacteria</taxon>
        <taxon>Rickettsiales</taxon>
        <taxon>Rickettsiaceae</taxon>
        <taxon>Rickettsieae</taxon>
        <taxon>Rickettsia</taxon>
        <taxon>spotted fever group</taxon>
    </lineage>
</organism>
<comment type="function">
    <text evidence="1">Cell wall formation.</text>
</comment>
<comment type="catalytic activity">
    <reaction evidence="1">
        <text>UDP-N-acetyl-alpha-D-muramate + L-alanine + ATP = UDP-N-acetyl-alpha-D-muramoyl-L-alanine + ADP + phosphate + H(+)</text>
        <dbReference type="Rhea" id="RHEA:23372"/>
        <dbReference type="ChEBI" id="CHEBI:15378"/>
        <dbReference type="ChEBI" id="CHEBI:30616"/>
        <dbReference type="ChEBI" id="CHEBI:43474"/>
        <dbReference type="ChEBI" id="CHEBI:57972"/>
        <dbReference type="ChEBI" id="CHEBI:70757"/>
        <dbReference type="ChEBI" id="CHEBI:83898"/>
        <dbReference type="ChEBI" id="CHEBI:456216"/>
        <dbReference type="EC" id="6.3.2.8"/>
    </reaction>
</comment>
<comment type="pathway">
    <text evidence="1">Cell wall biogenesis; peptidoglycan biosynthesis.</text>
</comment>
<comment type="subcellular location">
    <subcellularLocation>
        <location evidence="1">Cytoplasm</location>
    </subcellularLocation>
</comment>
<comment type="similarity">
    <text evidence="1">Belongs to the MurCDEF family.</text>
</comment>
<sequence length="485" mass="53310">MLLLELKKTNQTLETIHFIGIGGVGMSGIAEILYNLGYKVQGSDLVENYNTKRLESYGIKIFLGHAEQNITNVSYVVISSAINPKNPEIKEALERKIPIIRRADMLAELMRLKCSVAVSGSHGKTTTTSLVACLFEAAGLCPTVINGGIINNKSTNAYLGSSNYLIAEADESDATFIHIPSTIAIITNIDPEHLDYYRDFETLIGAFRSFITNLPFYGFAVCCIDHKIVRKLVDDITERKIVTYGIDSEDAHIIAFNINTDIASSTFDVKISLPNVLGTTIIEKITIPTPGRHNILNSLAAIAVGIELDFGIKAIKNGFNNFKGVKRRFTKVAEYNNASIIDDYAHHPEEIKATLATAKNIANKQNGKVIAIFQPHRYSRMQYLFDDFMLCFADADILYITDIYAAGENPIEGITGRSLVDKITKRKHHDKANFLAELDDAVGVIIDNAASGDMIIMMGAGNISSFANELEGRLSSRGFSCHTVV</sequence>
<proteinExistence type="inferred from homology"/>
<feature type="chain" id="PRO_0000182142" description="UDP-N-acetylmuramate--L-alanine ligase">
    <location>
        <begin position="1"/>
        <end position="485"/>
    </location>
</feature>
<feature type="binding site" evidence="1">
    <location>
        <begin position="120"/>
        <end position="126"/>
    </location>
    <ligand>
        <name>ATP</name>
        <dbReference type="ChEBI" id="CHEBI:30616"/>
    </ligand>
</feature>